<gene>
    <name type="primary">yme2</name>
    <name type="ORF">AFUA_1G07350</name>
</gene>
<sequence length="871" mass="99161">MIDVIIRHQASPLIESALVYQSITIIFGNAHLQSSFRKRNVILAAMMRTRIPGLVPRICQTPLPWKRPTQMTRVRYARWSTSHAVTWLETGHIDLKENEGLLFINNIFPSRLQWLLRGPLGGMRSYEAAVKRIDRPHLAASDTFQIIQRVVPKNLNVQVKEVVPRFREGGAFVKYTRPGDVNDADIEASIKENLKEHPIRPWFNPFQEVQVCRVIGRPWIEDLYRLPSPRLKVSFHPVSPEASAADLNTETLYTLFRPYGKIRDIETQPSDGKVTPRYAYVEFSRPKYAGMAKNCMHGFTIPEQEGGGKSGTRLKIKYERKIKLSMIKDWLLNHPRIVIPVLAALLAAITVTIFDPMRTFFIELKIKSTLQTEENGVMQWIRKQVNKANIIYFGRKGADPRGLTAIWEDRQEDITRLQSWLMENVETFIIIHGPRGSGKRELVLDRALVDYKYKIVIDCKQIQDARGDSAKIARAASQVGYRPVFSWMNSISSFIDLAAQGMIGTKAGFSETLDAQLSNIWQNTATALKKVTLEHRKKNDNDSHLTDEEYLEAHPELRPVVVIDNYLHNASESSVVYDKITEWAAGLTAGNIAHVIFLTTDVSYAKPLSKALPNSVFRTITLGDCSLEVGRKFVMSHLAYESKDGKTQPRRAEELEDLDACIEALGGRVTDLEFMAHRIEAGETPRGAVNRIIEQSASEILKMFLLTPETIEQSWTHEQAWYLIKRLAESKDGSLSYNEIVLSELFKENGEITLRALEHAELISIAAVNGCPQRIRPGKPVLRAVFKKVTENKALSSRMDLAIIAKKINKENKSIEKYEEELSLLGSLPRQPRELTDRIQWLLNKVYSSQNKIAKYEKESAYLQKILRSEH</sequence>
<accession>Q4WJ38</accession>
<dbReference type="EMBL" id="AAHF01000007">
    <property type="protein sequence ID" value="EAL88444.1"/>
    <property type="status" value="ALT_SEQ"/>
    <property type="molecule type" value="Genomic_DNA"/>
</dbReference>
<dbReference type="RefSeq" id="XP_750482.1">
    <property type="nucleotide sequence ID" value="XM_745389.1"/>
</dbReference>
<dbReference type="FunCoup" id="Q4WJ38">
    <property type="interactions" value="132"/>
</dbReference>
<dbReference type="GeneID" id="3507741"/>
<dbReference type="KEGG" id="afm:AFUA_1G07350"/>
<dbReference type="VEuPathDB" id="FungiDB:Afu1g07350"/>
<dbReference type="eggNOG" id="ENOG502QS0P">
    <property type="taxonomic scope" value="Eukaryota"/>
</dbReference>
<dbReference type="HOGENOM" id="CLU_007861_0_0_1"/>
<dbReference type="InParanoid" id="Q4WJ38"/>
<dbReference type="OrthoDB" id="10267654at2759"/>
<dbReference type="Proteomes" id="UP000002530">
    <property type="component" value="Chromosome 1"/>
</dbReference>
<dbReference type="GO" id="GO:0005743">
    <property type="term" value="C:mitochondrial inner membrane"/>
    <property type="evidence" value="ECO:0000318"/>
    <property type="project" value="GO_Central"/>
</dbReference>
<dbReference type="GO" id="GO:0003723">
    <property type="term" value="F:RNA binding"/>
    <property type="evidence" value="ECO:0007669"/>
    <property type="project" value="UniProtKB-KW"/>
</dbReference>
<dbReference type="GO" id="GO:0000002">
    <property type="term" value="P:mitochondrial genome maintenance"/>
    <property type="evidence" value="ECO:0000318"/>
    <property type="project" value="GO_Central"/>
</dbReference>
<dbReference type="GO" id="GO:0006397">
    <property type="term" value="P:mRNA processing"/>
    <property type="evidence" value="ECO:0007669"/>
    <property type="project" value="UniProtKB-KW"/>
</dbReference>
<dbReference type="FunFam" id="3.30.70.330:FF:000959">
    <property type="entry name" value="Mitochondrial escape protein 2"/>
    <property type="match status" value="1"/>
</dbReference>
<dbReference type="Gene3D" id="3.30.70.330">
    <property type="match status" value="1"/>
</dbReference>
<dbReference type="InterPro" id="IPR018850">
    <property type="entry name" value="Mt_escape_2_C"/>
</dbReference>
<dbReference type="InterPro" id="IPR012677">
    <property type="entry name" value="Nucleotide-bd_a/b_plait_sf"/>
</dbReference>
<dbReference type="InterPro" id="IPR035979">
    <property type="entry name" value="RBD_domain_sf"/>
</dbReference>
<dbReference type="InterPro" id="IPR000504">
    <property type="entry name" value="RRM_dom"/>
</dbReference>
<dbReference type="InterPro" id="IPR039627">
    <property type="entry name" value="Yme2_C"/>
</dbReference>
<dbReference type="PANTHER" id="PTHR32198">
    <property type="entry name" value="MITOCHONDRIAL ESCAPE PROTEIN 2"/>
    <property type="match status" value="1"/>
</dbReference>
<dbReference type="PANTHER" id="PTHR32198:SF2">
    <property type="entry name" value="MITOCHONDRIAL ESCAPE PROTEIN 2"/>
    <property type="match status" value="1"/>
</dbReference>
<dbReference type="Pfam" id="PF10443">
    <property type="entry name" value="RNA12"/>
    <property type="match status" value="1"/>
</dbReference>
<dbReference type="Pfam" id="PF00076">
    <property type="entry name" value="RRM_1"/>
    <property type="match status" value="1"/>
</dbReference>
<dbReference type="SUPFAM" id="SSF54928">
    <property type="entry name" value="RNA-binding domain, RBD"/>
    <property type="match status" value="1"/>
</dbReference>
<dbReference type="PROSITE" id="PS50102">
    <property type="entry name" value="RRM"/>
    <property type="match status" value="1"/>
</dbReference>
<feature type="transit peptide" description="Mitochondrion" evidence="2">
    <location>
        <begin position="1"/>
        <end status="unknown"/>
    </location>
</feature>
<feature type="chain" id="PRO_0000343113" description="Mitochondrial escape protein 2">
    <location>
        <begin status="unknown"/>
        <end position="871"/>
    </location>
</feature>
<feature type="topological domain" description="Mitochondrial matrix" evidence="2">
    <location>
        <begin status="unknown"/>
        <end position="336"/>
    </location>
</feature>
<feature type="transmembrane region" description="Helical" evidence="2">
    <location>
        <begin position="337"/>
        <end position="357"/>
    </location>
</feature>
<feature type="topological domain" description="Mitochondrial intermembrane" evidence="2">
    <location>
        <begin position="358"/>
        <end position="871"/>
    </location>
</feature>
<feature type="domain" description="RRM" evidence="3">
    <location>
        <begin position="229"/>
        <end position="321"/>
    </location>
</feature>
<keyword id="KW-0472">Membrane</keyword>
<keyword id="KW-0496">Mitochondrion</keyword>
<keyword id="KW-0999">Mitochondrion inner membrane</keyword>
<keyword id="KW-0507">mRNA processing</keyword>
<keyword id="KW-1185">Reference proteome</keyword>
<keyword id="KW-0694">RNA-binding</keyword>
<keyword id="KW-0809">Transit peptide</keyword>
<keyword id="KW-0812">Transmembrane</keyword>
<keyword id="KW-1133">Transmembrane helix</keyword>
<protein>
    <recommendedName>
        <fullName>Mitochondrial escape protein 2</fullName>
    </recommendedName>
</protein>
<reference key="1">
    <citation type="journal article" date="2005" name="Nature">
        <title>Genomic sequence of the pathogenic and allergenic filamentous fungus Aspergillus fumigatus.</title>
        <authorList>
            <person name="Nierman W.C."/>
            <person name="Pain A."/>
            <person name="Anderson M.J."/>
            <person name="Wortman J.R."/>
            <person name="Kim H.S."/>
            <person name="Arroyo J."/>
            <person name="Berriman M."/>
            <person name="Abe K."/>
            <person name="Archer D.B."/>
            <person name="Bermejo C."/>
            <person name="Bennett J.W."/>
            <person name="Bowyer P."/>
            <person name="Chen D."/>
            <person name="Collins M."/>
            <person name="Coulsen R."/>
            <person name="Davies R."/>
            <person name="Dyer P.S."/>
            <person name="Farman M.L."/>
            <person name="Fedorova N."/>
            <person name="Fedorova N.D."/>
            <person name="Feldblyum T.V."/>
            <person name="Fischer R."/>
            <person name="Fosker N."/>
            <person name="Fraser A."/>
            <person name="Garcia J.L."/>
            <person name="Garcia M.J."/>
            <person name="Goble A."/>
            <person name="Goldman G.H."/>
            <person name="Gomi K."/>
            <person name="Griffith-Jones S."/>
            <person name="Gwilliam R."/>
            <person name="Haas B.J."/>
            <person name="Haas H."/>
            <person name="Harris D.E."/>
            <person name="Horiuchi H."/>
            <person name="Huang J."/>
            <person name="Humphray S."/>
            <person name="Jimenez J."/>
            <person name="Keller N."/>
            <person name="Khouri H."/>
            <person name="Kitamoto K."/>
            <person name="Kobayashi T."/>
            <person name="Konzack S."/>
            <person name="Kulkarni R."/>
            <person name="Kumagai T."/>
            <person name="Lafton A."/>
            <person name="Latge J.-P."/>
            <person name="Li W."/>
            <person name="Lord A."/>
            <person name="Lu C."/>
            <person name="Majoros W.H."/>
            <person name="May G.S."/>
            <person name="Miller B.L."/>
            <person name="Mohamoud Y."/>
            <person name="Molina M."/>
            <person name="Monod M."/>
            <person name="Mouyna I."/>
            <person name="Mulligan S."/>
            <person name="Murphy L.D."/>
            <person name="O'Neil S."/>
            <person name="Paulsen I."/>
            <person name="Penalva M.A."/>
            <person name="Pertea M."/>
            <person name="Price C."/>
            <person name="Pritchard B.L."/>
            <person name="Quail M.A."/>
            <person name="Rabbinowitsch E."/>
            <person name="Rawlins N."/>
            <person name="Rajandream M.A."/>
            <person name="Reichard U."/>
            <person name="Renauld H."/>
            <person name="Robson G.D."/>
            <person name="Rodriguez de Cordoba S."/>
            <person name="Rodriguez-Pena J.M."/>
            <person name="Ronning C.M."/>
            <person name="Rutter S."/>
            <person name="Salzberg S.L."/>
            <person name="Sanchez M."/>
            <person name="Sanchez-Ferrero J.C."/>
            <person name="Saunders D."/>
            <person name="Seeger K."/>
            <person name="Squares R."/>
            <person name="Squares S."/>
            <person name="Takeuchi M."/>
            <person name="Tekaia F."/>
            <person name="Turner G."/>
            <person name="Vazquez de Aldana C.R."/>
            <person name="Weidman J."/>
            <person name="White O."/>
            <person name="Woodward J.R."/>
            <person name="Yu J.-H."/>
            <person name="Fraser C.M."/>
            <person name="Galagan J.E."/>
            <person name="Asai K."/>
            <person name="Machida M."/>
            <person name="Hall N."/>
            <person name="Barrell B.G."/>
            <person name="Denning D.W."/>
        </authorList>
    </citation>
    <scope>NUCLEOTIDE SEQUENCE [LARGE SCALE GENOMIC DNA]</scope>
    <source>
        <strain>ATCC MYA-4609 / CBS 101355 / FGSC A1100 / Af293</strain>
    </source>
</reference>
<comment type="function">
    <text evidence="1">Plays a role in maintaining the mitochondrial genome and in controlling the mtDNA escape. Involved in the regulation of mtDNA nucleotide structure and number. May have a dispensable role in early maturation of pre-rRNA (By similarity).</text>
</comment>
<comment type="subcellular location">
    <subcellularLocation>
        <location evidence="1">Mitochondrion inner membrane</location>
        <topology evidence="1">Single-pass membrane protein</topology>
    </subcellularLocation>
</comment>
<comment type="similarity">
    <text evidence="4">Belongs to the YME2 family.</text>
</comment>
<comment type="sequence caution" evidence="4">
    <conflict type="erroneous gene model prediction">
        <sequence resource="EMBL-CDS" id="EAL88444"/>
    </conflict>
</comment>
<organism>
    <name type="scientific">Aspergillus fumigatus (strain ATCC MYA-4609 / CBS 101355 / FGSC A1100 / Af293)</name>
    <name type="common">Neosartorya fumigata</name>
    <dbReference type="NCBI Taxonomy" id="330879"/>
    <lineage>
        <taxon>Eukaryota</taxon>
        <taxon>Fungi</taxon>
        <taxon>Dikarya</taxon>
        <taxon>Ascomycota</taxon>
        <taxon>Pezizomycotina</taxon>
        <taxon>Eurotiomycetes</taxon>
        <taxon>Eurotiomycetidae</taxon>
        <taxon>Eurotiales</taxon>
        <taxon>Aspergillaceae</taxon>
        <taxon>Aspergillus</taxon>
        <taxon>Aspergillus subgen. Fumigati</taxon>
    </lineage>
</organism>
<proteinExistence type="inferred from homology"/>
<name>YME2_ASPFU</name>
<evidence type="ECO:0000250" key="1"/>
<evidence type="ECO:0000255" key="2"/>
<evidence type="ECO:0000255" key="3">
    <source>
        <dbReference type="PROSITE-ProRule" id="PRU00176"/>
    </source>
</evidence>
<evidence type="ECO:0000305" key="4"/>